<protein>
    <recommendedName>
        <fullName>Uncharacterized protein YHR212W-A</fullName>
    </recommendedName>
</protein>
<reference key="1">
    <citation type="journal article" date="1994" name="Science">
        <title>Complete nucleotide sequence of Saccharomyces cerevisiae chromosome VIII.</title>
        <authorList>
            <person name="Johnston M."/>
            <person name="Andrews S."/>
            <person name="Brinkman R."/>
            <person name="Cooper J."/>
            <person name="Ding H."/>
            <person name="Dover J."/>
            <person name="Du Z."/>
            <person name="Favello A."/>
            <person name="Fulton L."/>
            <person name="Gattung S."/>
            <person name="Geisel C."/>
            <person name="Kirsten J."/>
            <person name="Kucaba T."/>
            <person name="Hillier L.W."/>
            <person name="Jier M."/>
            <person name="Johnston L."/>
            <person name="Langston Y."/>
            <person name="Latreille P."/>
            <person name="Louis E.J."/>
            <person name="Macri C."/>
            <person name="Mardis E."/>
            <person name="Menezes S."/>
            <person name="Mouser L."/>
            <person name="Nhan M."/>
            <person name="Rifkin L."/>
            <person name="Riles L."/>
            <person name="St Peter H."/>
            <person name="Trevaskis E."/>
            <person name="Vaughan K."/>
            <person name="Vignati D."/>
            <person name="Wilcox L."/>
            <person name="Wohldman P."/>
            <person name="Waterston R."/>
            <person name="Wilson R."/>
            <person name="Vaudin M."/>
        </authorList>
    </citation>
    <scope>NUCLEOTIDE SEQUENCE [LARGE SCALE GENOMIC DNA]</scope>
    <source>
        <strain>ATCC 204508 / S288c</strain>
    </source>
</reference>
<reference key="2">
    <citation type="journal article" date="2014" name="G3 (Bethesda)">
        <title>The reference genome sequence of Saccharomyces cerevisiae: Then and now.</title>
        <authorList>
            <person name="Engel S.R."/>
            <person name="Dietrich F.S."/>
            <person name="Fisk D.G."/>
            <person name="Binkley G."/>
            <person name="Balakrishnan R."/>
            <person name="Costanzo M.C."/>
            <person name="Dwight S.S."/>
            <person name="Hitz B.C."/>
            <person name="Karra K."/>
            <person name="Nash R.S."/>
            <person name="Weng S."/>
            <person name="Wong E.D."/>
            <person name="Lloyd P."/>
            <person name="Skrzypek M.S."/>
            <person name="Miyasato S.R."/>
            <person name="Simison M."/>
            <person name="Cherry J.M."/>
        </authorList>
    </citation>
    <scope>GENOME REANNOTATION</scope>
    <source>
        <strain>ATCC 204508 / S288c</strain>
    </source>
</reference>
<reference key="3">
    <citation type="journal article" date="2002" name="Nat. Biotechnol.">
        <title>An integrated approach for finding overlooked genes in yeast.</title>
        <authorList>
            <person name="Kumar A."/>
            <person name="Harrison P.M."/>
            <person name="Cheung K.-H."/>
            <person name="Lan N."/>
            <person name="Echols N."/>
            <person name="Bertone P."/>
            <person name="Miller P."/>
            <person name="Gerstein M.B."/>
            <person name="Snyder M."/>
        </authorList>
    </citation>
    <scope>NUCLEOTIDE SEQUENCE [GENOMIC DNA]</scope>
</reference>
<feature type="chain" id="PRO_0000410450" description="Uncharacterized protein YHR212W-A">
    <location>
        <begin position="1"/>
        <end position="67"/>
    </location>
</feature>
<comment type="miscellaneous">
    <text>Could be the product of a pseudogene. The ORF corresponds to a fragmentary flocculin piece with sequence similarity to FLO1.</text>
</comment>
<comment type="similarity">
    <text evidence="1">Belongs to the flocculin family.</text>
</comment>
<sequence>MPYHYLFLALFTYLATSNVVSGSTQACLPVGPRKNGMNVNFYKYSLLDSTTYSYPQYMTSGYASNWN</sequence>
<proteinExistence type="inferred from homology"/>
<keyword id="KW-1185">Reference proteome</keyword>
<gene>
    <name type="ordered locus">YHR212W-A</name>
</gene>
<dbReference type="EMBL" id="U00029">
    <property type="status" value="NOT_ANNOTATED_CDS"/>
    <property type="molecule type" value="Genomic_DNA"/>
</dbReference>
<dbReference type="EMBL" id="AF479995">
    <property type="protein sequence ID" value="AAL79308.1"/>
    <property type="molecule type" value="Genomic_DNA"/>
</dbReference>
<dbReference type="EMBL" id="BK006934">
    <property type="protein sequence ID" value="DAA06905.1"/>
    <property type="molecule type" value="Genomic_DNA"/>
</dbReference>
<dbReference type="PIR" id="S53470">
    <property type="entry name" value="S53470"/>
</dbReference>
<dbReference type="RefSeq" id="NP_878091.3">
    <property type="nucleotide sequence ID" value="NM_001184598.3"/>
</dbReference>
<dbReference type="BioGRID" id="37073">
    <property type="interactions" value="56"/>
</dbReference>
<dbReference type="FunCoup" id="P0CX91">
    <property type="interactions" value="13"/>
</dbReference>
<dbReference type="EnsemblFungi" id="YHR212W-A_mRNA">
    <property type="protein sequence ID" value="YHR212W-A"/>
    <property type="gene ID" value="YHR212W-A"/>
</dbReference>
<dbReference type="GeneID" id="1466531"/>
<dbReference type="KEGG" id="sce:YHR212W-A"/>
<dbReference type="AGR" id="SGD:S000028650"/>
<dbReference type="SGD" id="S000028650">
    <property type="gene designation" value="YHR212W-A"/>
</dbReference>
<dbReference type="VEuPathDB" id="FungiDB:YHR212W-A"/>
<dbReference type="GeneTree" id="ENSGT00940000180757"/>
<dbReference type="HOGENOM" id="CLU_2813859_0_0_1"/>
<dbReference type="InParanoid" id="P0CX91"/>
<dbReference type="OrthoDB" id="4070698at2759"/>
<dbReference type="BioCyc" id="YEAST:G3O-31270-MONOMER"/>
<dbReference type="PRO" id="PR:P0CX91"/>
<dbReference type="Proteomes" id="UP000002311">
    <property type="component" value="Chromosome VIII"/>
</dbReference>
<dbReference type="RNAct" id="P0CX91">
    <property type="molecule type" value="protein"/>
</dbReference>
<dbReference type="GO" id="GO:0005783">
    <property type="term" value="C:endoplasmic reticulum"/>
    <property type="evidence" value="ECO:0007005"/>
    <property type="project" value="SGD"/>
</dbReference>
<dbReference type="Gene3D" id="2.60.120.1560">
    <property type="match status" value="1"/>
</dbReference>
<organism>
    <name type="scientific">Saccharomyces cerevisiae (strain ATCC 204508 / S288c)</name>
    <name type="common">Baker's yeast</name>
    <dbReference type="NCBI Taxonomy" id="559292"/>
    <lineage>
        <taxon>Eukaryota</taxon>
        <taxon>Fungi</taxon>
        <taxon>Dikarya</taxon>
        <taxon>Ascomycota</taxon>
        <taxon>Saccharomycotina</taxon>
        <taxon>Saccharomycetes</taxon>
        <taxon>Saccharomycetales</taxon>
        <taxon>Saccharomycetaceae</taxon>
        <taxon>Saccharomyces</taxon>
    </lineage>
</organism>
<accession>P0CX91</accession>
<accession>D3DLG1</accession>
<accession>P39561</accession>
<accession>Q547K8</accession>
<evidence type="ECO:0000305" key="1"/>
<name>YH21A_YEAST</name>